<dbReference type="EC" id="2.1.2.11" evidence="1"/>
<dbReference type="EMBL" id="CP000350">
    <property type="protein sequence ID" value="ABJ75069.1"/>
    <property type="molecule type" value="Genomic_DNA"/>
</dbReference>
<dbReference type="RefSeq" id="WP_011671511.1">
    <property type="nucleotide sequence ID" value="NC_008510.1"/>
</dbReference>
<dbReference type="SMR" id="Q04VK1"/>
<dbReference type="KEGG" id="lbj:LBJ_0347"/>
<dbReference type="HOGENOM" id="CLU_036645_1_0_12"/>
<dbReference type="UniPathway" id="UPA00028">
    <property type="reaction ID" value="UER00003"/>
</dbReference>
<dbReference type="Proteomes" id="UP000000656">
    <property type="component" value="Chromosome 1"/>
</dbReference>
<dbReference type="GO" id="GO:0005737">
    <property type="term" value="C:cytoplasm"/>
    <property type="evidence" value="ECO:0007669"/>
    <property type="project" value="UniProtKB-SubCell"/>
</dbReference>
<dbReference type="GO" id="GO:0003864">
    <property type="term" value="F:3-methyl-2-oxobutanoate hydroxymethyltransferase activity"/>
    <property type="evidence" value="ECO:0007669"/>
    <property type="project" value="UniProtKB-UniRule"/>
</dbReference>
<dbReference type="GO" id="GO:0000287">
    <property type="term" value="F:magnesium ion binding"/>
    <property type="evidence" value="ECO:0007669"/>
    <property type="project" value="TreeGrafter"/>
</dbReference>
<dbReference type="GO" id="GO:0015940">
    <property type="term" value="P:pantothenate biosynthetic process"/>
    <property type="evidence" value="ECO:0007669"/>
    <property type="project" value="UniProtKB-UniRule"/>
</dbReference>
<dbReference type="CDD" id="cd06557">
    <property type="entry name" value="KPHMT-like"/>
    <property type="match status" value="1"/>
</dbReference>
<dbReference type="FunFam" id="3.20.20.60:FF:000003">
    <property type="entry name" value="3-methyl-2-oxobutanoate hydroxymethyltransferase"/>
    <property type="match status" value="1"/>
</dbReference>
<dbReference type="Gene3D" id="3.20.20.60">
    <property type="entry name" value="Phosphoenolpyruvate-binding domains"/>
    <property type="match status" value="1"/>
</dbReference>
<dbReference type="HAMAP" id="MF_00156">
    <property type="entry name" value="PanB"/>
    <property type="match status" value="1"/>
</dbReference>
<dbReference type="InterPro" id="IPR003700">
    <property type="entry name" value="Pantoate_hydroxy_MeTrfase"/>
</dbReference>
<dbReference type="InterPro" id="IPR015813">
    <property type="entry name" value="Pyrv/PenolPyrv_kinase-like_dom"/>
</dbReference>
<dbReference type="InterPro" id="IPR040442">
    <property type="entry name" value="Pyrv_kinase-like_dom_sf"/>
</dbReference>
<dbReference type="NCBIfam" id="TIGR00222">
    <property type="entry name" value="panB"/>
    <property type="match status" value="1"/>
</dbReference>
<dbReference type="NCBIfam" id="NF001452">
    <property type="entry name" value="PRK00311.1"/>
    <property type="match status" value="1"/>
</dbReference>
<dbReference type="PANTHER" id="PTHR20881">
    <property type="entry name" value="3-METHYL-2-OXOBUTANOATE HYDROXYMETHYLTRANSFERASE"/>
    <property type="match status" value="1"/>
</dbReference>
<dbReference type="PANTHER" id="PTHR20881:SF0">
    <property type="entry name" value="3-METHYL-2-OXOBUTANOATE HYDROXYMETHYLTRANSFERASE"/>
    <property type="match status" value="1"/>
</dbReference>
<dbReference type="Pfam" id="PF02548">
    <property type="entry name" value="Pantoate_transf"/>
    <property type="match status" value="1"/>
</dbReference>
<dbReference type="PIRSF" id="PIRSF000388">
    <property type="entry name" value="Pantoate_hydroxy_MeTrfase"/>
    <property type="match status" value="1"/>
</dbReference>
<dbReference type="SUPFAM" id="SSF51621">
    <property type="entry name" value="Phosphoenolpyruvate/pyruvate domain"/>
    <property type="match status" value="1"/>
</dbReference>
<accession>Q04VK1</accession>
<evidence type="ECO:0000255" key="1">
    <source>
        <dbReference type="HAMAP-Rule" id="MF_00156"/>
    </source>
</evidence>
<protein>
    <recommendedName>
        <fullName evidence="1">3-methyl-2-oxobutanoate hydroxymethyltransferase</fullName>
        <ecNumber evidence="1">2.1.2.11</ecNumber>
    </recommendedName>
    <alternativeName>
        <fullName evidence="1">Ketopantoate hydroxymethyltransferase</fullName>
        <shortName evidence="1">KPHMT</shortName>
    </alternativeName>
</protein>
<keyword id="KW-0963">Cytoplasm</keyword>
<keyword id="KW-0460">Magnesium</keyword>
<keyword id="KW-0479">Metal-binding</keyword>
<keyword id="KW-0566">Pantothenate biosynthesis</keyword>
<keyword id="KW-0808">Transferase</keyword>
<organism>
    <name type="scientific">Leptospira borgpetersenii serovar Hardjo-bovis (strain JB197)</name>
    <dbReference type="NCBI Taxonomy" id="355277"/>
    <lineage>
        <taxon>Bacteria</taxon>
        <taxon>Pseudomonadati</taxon>
        <taxon>Spirochaetota</taxon>
        <taxon>Spirochaetia</taxon>
        <taxon>Leptospirales</taxon>
        <taxon>Leptospiraceae</taxon>
        <taxon>Leptospira</taxon>
    </lineage>
</organism>
<reference key="1">
    <citation type="journal article" date="2006" name="Proc. Natl. Acad. Sci. U.S.A.">
        <title>Genome reduction in Leptospira borgpetersenii reflects limited transmission potential.</title>
        <authorList>
            <person name="Bulach D.M."/>
            <person name="Zuerner R.L."/>
            <person name="Wilson P."/>
            <person name="Seemann T."/>
            <person name="McGrath A."/>
            <person name="Cullen P.A."/>
            <person name="Davis J."/>
            <person name="Johnson M."/>
            <person name="Kuczek E."/>
            <person name="Alt D.P."/>
            <person name="Peterson-Burch B."/>
            <person name="Coppel R.L."/>
            <person name="Rood J.I."/>
            <person name="Davies J.K."/>
            <person name="Adler B."/>
        </authorList>
    </citation>
    <scope>NUCLEOTIDE SEQUENCE [LARGE SCALE GENOMIC DNA]</scope>
    <source>
        <strain>JB197</strain>
    </source>
</reference>
<comment type="function">
    <text evidence="1">Catalyzes the reversible reaction in which hydroxymethyl group from 5,10-methylenetetrahydrofolate is transferred onto alpha-ketoisovalerate to form ketopantoate.</text>
</comment>
<comment type="catalytic activity">
    <reaction evidence="1">
        <text>3-methyl-2-oxobutanoate + (6R)-5,10-methylene-5,6,7,8-tetrahydrofolate + H2O = 2-dehydropantoate + (6S)-5,6,7,8-tetrahydrofolate</text>
        <dbReference type="Rhea" id="RHEA:11824"/>
        <dbReference type="ChEBI" id="CHEBI:11561"/>
        <dbReference type="ChEBI" id="CHEBI:11851"/>
        <dbReference type="ChEBI" id="CHEBI:15377"/>
        <dbReference type="ChEBI" id="CHEBI:15636"/>
        <dbReference type="ChEBI" id="CHEBI:57453"/>
        <dbReference type="EC" id="2.1.2.11"/>
    </reaction>
</comment>
<comment type="cofactor">
    <cofactor evidence="1">
        <name>Mg(2+)</name>
        <dbReference type="ChEBI" id="CHEBI:18420"/>
    </cofactor>
    <text evidence="1">Binds 1 Mg(2+) ion per subunit.</text>
</comment>
<comment type="pathway">
    <text evidence="1">Cofactor biosynthesis; (R)-pantothenate biosynthesis; (R)-pantoate from 3-methyl-2-oxobutanoate: step 1/2.</text>
</comment>
<comment type="subunit">
    <text evidence="1">Homodecamer; pentamer of dimers.</text>
</comment>
<comment type="subcellular location">
    <subcellularLocation>
        <location evidence="1">Cytoplasm</location>
    </subcellularLocation>
</comment>
<comment type="similarity">
    <text evidence="1">Belongs to the PanB family.</text>
</comment>
<sequence length="265" mass="28822">MKNIHKIFSPEKKGKEKISVVTCYDFSFARILGETPIDSILVGDSLGMVFQGNSSTLPVTLEEMIYHTKVVRRGAPDKFIIADLPFLSYQTSIEEGIRSAGRMMKETDCDAVKIEGGSDFICELVAILKQIGIPVMGHLGLTPQSVHVFGGHRVQGKGEESSAKLLREAVALSESGAFSIVLEMIPAELGKRVSEEVGVLTIGIGAGPDCDGQVLVLNDLLGLDANFQPKFLKKFSNLHSIVKDAIESYHEEVRSGEFPGKDHSF</sequence>
<gene>
    <name evidence="1" type="primary">panB</name>
    <name type="ordered locus">LBJ_0347</name>
</gene>
<feature type="chain" id="PRO_0000297287" description="3-methyl-2-oxobutanoate hydroxymethyltransferase">
    <location>
        <begin position="1"/>
        <end position="265"/>
    </location>
</feature>
<feature type="active site" description="Proton acceptor" evidence="1">
    <location>
        <position position="183"/>
    </location>
</feature>
<feature type="binding site" evidence="1">
    <location>
        <begin position="44"/>
        <end position="45"/>
    </location>
    <ligand>
        <name>3-methyl-2-oxobutanoate</name>
        <dbReference type="ChEBI" id="CHEBI:11851"/>
    </ligand>
</feature>
<feature type="binding site" evidence="1">
    <location>
        <position position="44"/>
    </location>
    <ligand>
        <name>Mg(2+)</name>
        <dbReference type="ChEBI" id="CHEBI:18420"/>
    </ligand>
</feature>
<feature type="binding site" evidence="1">
    <location>
        <position position="83"/>
    </location>
    <ligand>
        <name>3-methyl-2-oxobutanoate</name>
        <dbReference type="ChEBI" id="CHEBI:11851"/>
    </ligand>
</feature>
<feature type="binding site" evidence="1">
    <location>
        <position position="83"/>
    </location>
    <ligand>
        <name>Mg(2+)</name>
        <dbReference type="ChEBI" id="CHEBI:18420"/>
    </ligand>
</feature>
<feature type="binding site" evidence="1">
    <location>
        <position position="113"/>
    </location>
    <ligand>
        <name>3-methyl-2-oxobutanoate</name>
        <dbReference type="ChEBI" id="CHEBI:11851"/>
    </ligand>
</feature>
<feature type="binding site" evidence="1">
    <location>
        <position position="115"/>
    </location>
    <ligand>
        <name>Mg(2+)</name>
        <dbReference type="ChEBI" id="CHEBI:18420"/>
    </ligand>
</feature>
<name>PANB_LEPBJ</name>
<proteinExistence type="inferred from homology"/>